<reference key="1">
    <citation type="journal article" date="2010" name="Genome Biol. Evol.">
        <title>Continuing evolution of Burkholderia mallei through genome reduction and large-scale rearrangements.</title>
        <authorList>
            <person name="Losada L."/>
            <person name="Ronning C.M."/>
            <person name="DeShazer D."/>
            <person name="Woods D."/>
            <person name="Fedorova N."/>
            <person name="Kim H.S."/>
            <person name="Shabalina S.A."/>
            <person name="Pearson T.R."/>
            <person name="Brinkac L."/>
            <person name="Tan P."/>
            <person name="Nandi T."/>
            <person name="Crabtree J."/>
            <person name="Badger J."/>
            <person name="Beckstrom-Sternberg S."/>
            <person name="Saqib M."/>
            <person name="Schutzer S.E."/>
            <person name="Keim P."/>
            <person name="Nierman W.C."/>
        </authorList>
    </citation>
    <scope>NUCLEOTIDE SEQUENCE [LARGE SCALE GENOMIC DNA]</scope>
    <source>
        <strain>SAVP1</strain>
    </source>
</reference>
<sequence length="299" mass="32119">MSEPIDLSQISPALKAEILAEALPYIRRYHGKTVVIKYGGNAMTEERLKQGFARDVILLKLVGINPVIVHGGGPQIDQALKKIGKQGTFIQGMRVTDEETMEVVEWVLGGEVQQDIVTLINHFGGHAVGLTGKDGGLIHARKLMMPDRDNPGEYVDIGQVGEVEAINPAVVKALQDDAFIPVISPIGFGEDGLSYNINADLVAGKLATVLNAEKLVMMTNIPGVMDKEGNLLTDLSAREIDALFEDGTISGGMLPKISSALDAAKSGVKSVHIVDGRIEHSVLLEILTEQPFGTMIRSH</sequence>
<accession>A1V7K1</accession>
<evidence type="ECO:0000255" key="1">
    <source>
        <dbReference type="HAMAP-Rule" id="MF_00082"/>
    </source>
</evidence>
<evidence type="ECO:0000305" key="2"/>
<gene>
    <name evidence="1" type="primary">argB</name>
    <name type="ordered locus">BMASAVP1_A2910</name>
</gene>
<dbReference type="EC" id="2.7.2.8" evidence="1"/>
<dbReference type="EMBL" id="CP000526">
    <property type="protein sequence ID" value="ABM52814.1"/>
    <property type="status" value="ALT_INIT"/>
    <property type="molecule type" value="Genomic_DNA"/>
</dbReference>
<dbReference type="RefSeq" id="WP_004200214.1">
    <property type="nucleotide sequence ID" value="NC_008785.1"/>
</dbReference>
<dbReference type="SMR" id="A1V7K1"/>
<dbReference type="GeneID" id="93058708"/>
<dbReference type="KEGG" id="bmv:BMASAVP1_A2910"/>
<dbReference type="HOGENOM" id="CLU_053680_0_0_4"/>
<dbReference type="UniPathway" id="UPA00068">
    <property type="reaction ID" value="UER00107"/>
</dbReference>
<dbReference type="GO" id="GO:0005737">
    <property type="term" value="C:cytoplasm"/>
    <property type="evidence" value="ECO:0007669"/>
    <property type="project" value="UniProtKB-SubCell"/>
</dbReference>
<dbReference type="GO" id="GO:0003991">
    <property type="term" value="F:acetylglutamate kinase activity"/>
    <property type="evidence" value="ECO:0007669"/>
    <property type="project" value="UniProtKB-UniRule"/>
</dbReference>
<dbReference type="GO" id="GO:0005524">
    <property type="term" value="F:ATP binding"/>
    <property type="evidence" value="ECO:0007669"/>
    <property type="project" value="UniProtKB-UniRule"/>
</dbReference>
<dbReference type="GO" id="GO:0042450">
    <property type="term" value="P:arginine biosynthetic process via ornithine"/>
    <property type="evidence" value="ECO:0007669"/>
    <property type="project" value="UniProtKB-UniRule"/>
</dbReference>
<dbReference type="GO" id="GO:0006526">
    <property type="term" value="P:L-arginine biosynthetic process"/>
    <property type="evidence" value="ECO:0007669"/>
    <property type="project" value="UniProtKB-UniPathway"/>
</dbReference>
<dbReference type="CDD" id="cd04250">
    <property type="entry name" value="AAK_NAGK-C"/>
    <property type="match status" value="1"/>
</dbReference>
<dbReference type="FunFam" id="3.40.1160.10:FF:000004">
    <property type="entry name" value="Acetylglutamate kinase"/>
    <property type="match status" value="1"/>
</dbReference>
<dbReference type="Gene3D" id="3.40.1160.10">
    <property type="entry name" value="Acetylglutamate kinase-like"/>
    <property type="match status" value="1"/>
</dbReference>
<dbReference type="HAMAP" id="MF_00082">
    <property type="entry name" value="ArgB"/>
    <property type="match status" value="1"/>
</dbReference>
<dbReference type="InterPro" id="IPR036393">
    <property type="entry name" value="AceGlu_kinase-like_sf"/>
</dbReference>
<dbReference type="InterPro" id="IPR004662">
    <property type="entry name" value="AcgluKinase_fam"/>
</dbReference>
<dbReference type="InterPro" id="IPR037528">
    <property type="entry name" value="ArgB"/>
</dbReference>
<dbReference type="InterPro" id="IPR001048">
    <property type="entry name" value="Asp/Glu/Uridylate_kinase"/>
</dbReference>
<dbReference type="InterPro" id="IPR041727">
    <property type="entry name" value="NAGK-C"/>
</dbReference>
<dbReference type="NCBIfam" id="TIGR00761">
    <property type="entry name" value="argB"/>
    <property type="match status" value="1"/>
</dbReference>
<dbReference type="PANTHER" id="PTHR23342">
    <property type="entry name" value="N-ACETYLGLUTAMATE SYNTHASE"/>
    <property type="match status" value="1"/>
</dbReference>
<dbReference type="PANTHER" id="PTHR23342:SF0">
    <property type="entry name" value="N-ACETYLGLUTAMATE SYNTHASE, MITOCHONDRIAL"/>
    <property type="match status" value="1"/>
</dbReference>
<dbReference type="Pfam" id="PF00696">
    <property type="entry name" value="AA_kinase"/>
    <property type="match status" value="1"/>
</dbReference>
<dbReference type="PIRSF" id="PIRSF000728">
    <property type="entry name" value="NAGK"/>
    <property type="match status" value="1"/>
</dbReference>
<dbReference type="SUPFAM" id="SSF53633">
    <property type="entry name" value="Carbamate kinase-like"/>
    <property type="match status" value="1"/>
</dbReference>
<feature type="chain" id="PRO_0000335614" description="Acetylglutamate kinase">
    <location>
        <begin position="1"/>
        <end position="299"/>
    </location>
</feature>
<feature type="binding site" evidence="1">
    <location>
        <begin position="72"/>
        <end position="73"/>
    </location>
    <ligand>
        <name>substrate</name>
    </ligand>
</feature>
<feature type="binding site" evidence="1">
    <location>
        <position position="94"/>
    </location>
    <ligand>
        <name>substrate</name>
    </ligand>
</feature>
<feature type="binding site" evidence="1">
    <location>
        <position position="196"/>
    </location>
    <ligand>
        <name>substrate</name>
    </ligand>
</feature>
<feature type="site" description="Transition state stabilizer" evidence="1">
    <location>
        <position position="37"/>
    </location>
</feature>
<feature type="site" description="Transition state stabilizer" evidence="1">
    <location>
        <position position="256"/>
    </location>
</feature>
<keyword id="KW-0028">Amino-acid biosynthesis</keyword>
<keyword id="KW-0055">Arginine biosynthesis</keyword>
<keyword id="KW-0067">ATP-binding</keyword>
<keyword id="KW-0963">Cytoplasm</keyword>
<keyword id="KW-0418">Kinase</keyword>
<keyword id="KW-0547">Nucleotide-binding</keyword>
<keyword id="KW-0808">Transferase</keyword>
<protein>
    <recommendedName>
        <fullName evidence="1">Acetylglutamate kinase</fullName>
        <ecNumber evidence="1">2.7.2.8</ecNumber>
    </recommendedName>
    <alternativeName>
        <fullName evidence="1">N-acetyl-L-glutamate 5-phosphotransferase</fullName>
    </alternativeName>
    <alternativeName>
        <fullName evidence="1">NAG kinase</fullName>
        <shortName evidence="1">NAGK</shortName>
    </alternativeName>
</protein>
<organism>
    <name type="scientific">Burkholderia mallei (strain SAVP1)</name>
    <dbReference type="NCBI Taxonomy" id="320388"/>
    <lineage>
        <taxon>Bacteria</taxon>
        <taxon>Pseudomonadati</taxon>
        <taxon>Pseudomonadota</taxon>
        <taxon>Betaproteobacteria</taxon>
        <taxon>Burkholderiales</taxon>
        <taxon>Burkholderiaceae</taxon>
        <taxon>Burkholderia</taxon>
        <taxon>pseudomallei group</taxon>
    </lineage>
</organism>
<name>ARGB_BURMS</name>
<proteinExistence type="inferred from homology"/>
<comment type="function">
    <text evidence="1">Catalyzes the ATP-dependent phosphorylation of N-acetyl-L-glutamate.</text>
</comment>
<comment type="catalytic activity">
    <reaction evidence="1">
        <text>N-acetyl-L-glutamate + ATP = N-acetyl-L-glutamyl 5-phosphate + ADP</text>
        <dbReference type="Rhea" id="RHEA:14629"/>
        <dbReference type="ChEBI" id="CHEBI:30616"/>
        <dbReference type="ChEBI" id="CHEBI:44337"/>
        <dbReference type="ChEBI" id="CHEBI:57936"/>
        <dbReference type="ChEBI" id="CHEBI:456216"/>
        <dbReference type="EC" id="2.7.2.8"/>
    </reaction>
</comment>
<comment type="pathway">
    <text evidence="1">Amino-acid biosynthesis; L-arginine biosynthesis; N(2)-acetyl-L-ornithine from L-glutamate: step 2/4.</text>
</comment>
<comment type="subcellular location">
    <subcellularLocation>
        <location evidence="1">Cytoplasm</location>
    </subcellularLocation>
</comment>
<comment type="similarity">
    <text evidence="1">Belongs to the acetylglutamate kinase family. ArgB subfamily.</text>
</comment>
<comment type="sequence caution" evidence="2">
    <conflict type="erroneous initiation">
        <sequence resource="EMBL-CDS" id="ABM52814"/>
    </conflict>
</comment>